<feature type="chain" id="PRO_0000134748" description="6,7-dimethyl-8-ribityllumazine synthase">
    <location>
        <begin position="1"/>
        <end position="159"/>
    </location>
</feature>
<feature type="active site" description="Proton donor" evidence="1">
    <location>
        <position position="87"/>
    </location>
</feature>
<feature type="binding site" evidence="1">
    <location>
        <position position="26"/>
    </location>
    <ligand>
        <name>5-amino-6-(D-ribitylamino)uracil</name>
        <dbReference type="ChEBI" id="CHEBI:15934"/>
    </ligand>
</feature>
<feature type="binding site" evidence="1">
    <location>
        <begin position="57"/>
        <end position="59"/>
    </location>
    <ligand>
        <name>5-amino-6-(D-ribitylamino)uracil</name>
        <dbReference type="ChEBI" id="CHEBI:15934"/>
    </ligand>
</feature>
<feature type="binding site" evidence="1">
    <location>
        <begin position="79"/>
        <end position="81"/>
    </location>
    <ligand>
        <name>5-amino-6-(D-ribitylamino)uracil</name>
        <dbReference type="ChEBI" id="CHEBI:15934"/>
    </ligand>
</feature>
<feature type="binding site" evidence="1">
    <location>
        <begin position="84"/>
        <end position="85"/>
    </location>
    <ligand>
        <name>(2S)-2-hydroxy-3-oxobutyl phosphate</name>
        <dbReference type="ChEBI" id="CHEBI:58830"/>
    </ligand>
</feature>
<feature type="binding site" evidence="1">
    <location>
        <position position="112"/>
    </location>
    <ligand>
        <name>5-amino-6-(D-ribitylamino)uracil</name>
        <dbReference type="ChEBI" id="CHEBI:15934"/>
    </ligand>
</feature>
<feature type="binding site" evidence="1">
    <location>
        <position position="126"/>
    </location>
    <ligand>
        <name>(2S)-2-hydroxy-3-oxobutyl phosphate</name>
        <dbReference type="ChEBI" id="CHEBI:58830"/>
    </ligand>
</feature>
<comment type="function">
    <text evidence="1">Catalyzes the formation of 6,7-dimethyl-8-ribityllumazine by condensation of 5-amino-6-(D-ribitylamino)uracil with 3,4-dihydroxy-2-butanone 4-phosphate. This is the penultimate step in the biosynthesis of riboflavin.</text>
</comment>
<comment type="catalytic activity">
    <reaction evidence="1">
        <text>(2S)-2-hydroxy-3-oxobutyl phosphate + 5-amino-6-(D-ribitylamino)uracil = 6,7-dimethyl-8-(1-D-ribityl)lumazine + phosphate + 2 H2O + H(+)</text>
        <dbReference type="Rhea" id="RHEA:26152"/>
        <dbReference type="ChEBI" id="CHEBI:15377"/>
        <dbReference type="ChEBI" id="CHEBI:15378"/>
        <dbReference type="ChEBI" id="CHEBI:15934"/>
        <dbReference type="ChEBI" id="CHEBI:43474"/>
        <dbReference type="ChEBI" id="CHEBI:58201"/>
        <dbReference type="ChEBI" id="CHEBI:58830"/>
        <dbReference type="EC" id="2.5.1.78"/>
    </reaction>
</comment>
<comment type="pathway">
    <text evidence="1">Cofactor biosynthesis; riboflavin biosynthesis; riboflavin from 2-hydroxy-3-oxobutyl phosphate and 5-amino-6-(D-ribitylamino)uracil: step 1/2.</text>
</comment>
<comment type="similarity">
    <text evidence="1">Belongs to the DMRL synthase family.</text>
</comment>
<sequence length="159" mass="16660">MAKEGLPEITLPDATGLRVAVVTARWNAEICDRLHDHAVTAGRAAGAEVSEYRVVGALELPVVVQELARTHDAVVALGCVIRGGTPHFDYVCDSVTEGLTRIALDTSTPIGNGVLTTNTEEQAIERSGAEGSVEDKGAEAMVAALDTALVLSRIRADRG</sequence>
<evidence type="ECO:0000255" key="1">
    <source>
        <dbReference type="HAMAP-Rule" id="MF_00178"/>
    </source>
</evidence>
<reference key="1">
    <citation type="journal article" date="2003" name="Genome Res.">
        <title>Comparative complete genome sequence analysis of the amino acid replacements responsible for the thermostability of Corynebacterium efficiens.</title>
        <authorList>
            <person name="Nishio Y."/>
            <person name="Nakamura Y."/>
            <person name="Kawarabayasi Y."/>
            <person name="Usuda Y."/>
            <person name="Kimura E."/>
            <person name="Sugimoto S."/>
            <person name="Matsui K."/>
            <person name="Yamagishi A."/>
            <person name="Kikuchi H."/>
            <person name="Ikeo K."/>
            <person name="Gojobori T."/>
        </authorList>
    </citation>
    <scope>NUCLEOTIDE SEQUENCE [LARGE SCALE GENOMIC DNA]</scope>
    <source>
        <strain>DSM 44549 / YS-314 / AJ 12310 / JCM 11189 / NBRC 100395</strain>
    </source>
</reference>
<proteinExistence type="inferred from homology"/>
<accession>Q8FT58</accession>
<keyword id="KW-1185">Reference proteome</keyword>
<keyword id="KW-0686">Riboflavin biosynthesis</keyword>
<keyword id="KW-0808">Transferase</keyword>
<dbReference type="EC" id="2.5.1.78" evidence="1"/>
<dbReference type="EMBL" id="BA000035">
    <property type="protein sequence ID" value="BAC18523.1"/>
    <property type="molecule type" value="Genomic_DNA"/>
</dbReference>
<dbReference type="RefSeq" id="WP_006767714.1">
    <property type="nucleotide sequence ID" value="NC_004369.1"/>
</dbReference>
<dbReference type="SMR" id="Q8FT58"/>
<dbReference type="STRING" id="196164.gene:10742134"/>
<dbReference type="KEGG" id="cef:CE1713"/>
<dbReference type="eggNOG" id="COG0054">
    <property type="taxonomic scope" value="Bacteria"/>
</dbReference>
<dbReference type="HOGENOM" id="CLU_089358_1_2_11"/>
<dbReference type="OrthoDB" id="9809709at2"/>
<dbReference type="UniPathway" id="UPA00275">
    <property type="reaction ID" value="UER00404"/>
</dbReference>
<dbReference type="Proteomes" id="UP000001409">
    <property type="component" value="Chromosome"/>
</dbReference>
<dbReference type="GO" id="GO:0005829">
    <property type="term" value="C:cytosol"/>
    <property type="evidence" value="ECO:0007669"/>
    <property type="project" value="TreeGrafter"/>
</dbReference>
<dbReference type="GO" id="GO:0009349">
    <property type="term" value="C:riboflavin synthase complex"/>
    <property type="evidence" value="ECO:0007669"/>
    <property type="project" value="InterPro"/>
</dbReference>
<dbReference type="GO" id="GO:0000906">
    <property type="term" value="F:6,7-dimethyl-8-ribityllumazine synthase activity"/>
    <property type="evidence" value="ECO:0007669"/>
    <property type="project" value="UniProtKB-UniRule"/>
</dbReference>
<dbReference type="GO" id="GO:0009231">
    <property type="term" value="P:riboflavin biosynthetic process"/>
    <property type="evidence" value="ECO:0007669"/>
    <property type="project" value="UniProtKB-UniRule"/>
</dbReference>
<dbReference type="CDD" id="cd09209">
    <property type="entry name" value="Lumazine_synthase-I"/>
    <property type="match status" value="1"/>
</dbReference>
<dbReference type="Gene3D" id="3.40.50.960">
    <property type="entry name" value="Lumazine/riboflavin synthase"/>
    <property type="match status" value="1"/>
</dbReference>
<dbReference type="HAMAP" id="MF_00178">
    <property type="entry name" value="Lumazine_synth"/>
    <property type="match status" value="1"/>
</dbReference>
<dbReference type="InterPro" id="IPR034964">
    <property type="entry name" value="LS"/>
</dbReference>
<dbReference type="InterPro" id="IPR002180">
    <property type="entry name" value="LS/RS"/>
</dbReference>
<dbReference type="InterPro" id="IPR036467">
    <property type="entry name" value="LS/RS_sf"/>
</dbReference>
<dbReference type="NCBIfam" id="TIGR00114">
    <property type="entry name" value="lumazine-synth"/>
    <property type="match status" value="1"/>
</dbReference>
<dbReference type="PANTHER" id="PTHR21058:SF0">
    <property type="entry name" value="6,7-DIMETHYL-8-RIBITYLLUMAZINE SYNTHASE"/>
    <property type="match status" value="1"/>
</dbReference>
<dbReference type="PANTHER" id="PTHR21058">
    <property type="entry name" value="6,7-DIMETHYL-8-RIBITYLLUMAZINE SYNTHASE DMRL SYNTHASE LUMAZINE SYNTHASE"/>
    <property type="match status" value="1"/>
</dbReference>
<dbReference type="Pfam" id="PF00885">
    <property type="entry name" value="DMRL_synthase"/>
    <property type="match status" value="1"/>
</dbReference>
<dbReference type="SUPFAM" id="SSF52121">
    <property type="entry name" value="Lumazine synthase"/>
    <property type="match status" value="1"/>
</dbReference>
<name>RISB_COREF</name>
<protein>
    <recommendedName>
        <fullName evidence="1">6,7-dimethyl-8-ribityllumazine synthase</fullName>
        <shortName evidence="1">DMRL synthase</shortName>
        <shortName evidence="1">LS</shortName>
        <shortName evidence="1">Lumazine synthase</shortName>
        <ecNumber evidence="1">2.5.1.78</ecNumber>
    </recommendedName>
</protein>
<gene>
    <name evidence="1" type="primary">ribH</name>
    <name type="synonym">risB</name>
    <name type="ordered locus">CE1713</name>
</gene>
<organism>
    <name type="scientific">Corynebacterium efficiens (strain DSM 44549 / YS-314 / AJ 12310 / JCM 11189 / NBRC 100395)</name>
    <dbReference type="NCBI Taxonomy" id="196164"/>
    <lineage>
        <taxon>Bacteria</taxon>
        <taxon>Bacillati</taxon>
        <taxon>Actinomycetota</taxon>
        <taxon>Actinomycetes</taxon>
        <taxon>Mycobacteriales</taxon>
        <taxon>Corynebacteriaceae</taxon>
        <taxon>Corynebacterium</taxon>
    </lineage>
</organism>